<sequence>MLAFCRSSLKSKKYFIILLALAAIAGLGTHAAWSSNGLPRIDNKTLARLAQQHPVVVLFRHAERCDRSTNQCLSDKTGITVKGTQDARELGNAFSADIPDFDLYSSNTVRTIQSATWFSAGKKLTVDKRFLQCGNEIYSAIKDLQRKAPDKNIVIFTHNHCLTYIAKDKRDATFKPDYLDGLVMHVEKGKVYLDGEFVNH</sequence>
<comment type="function">
    <text evidence="1">Catalyzes the dephosphorylation of heptose(II) of the outer membrane lipopolysaccharide core.</text>
</comment>
<comment type="pathway">
    <text evidence="1">Bacterial outer membrane biogenesis; lipopolysaccharide metabolism.</text>
</comment>
<comment type="subcellular location">
    <subcellularLocation>
        <location evidence="1">Periplasm</location>
    </subcellularLocation>
</comment>
<comment type="similarity">
    <text evidence="1">Belongs to the phosphoglycerate mutase family. Ais subfamily.</text>
</comment>
<feature type="signal peptide" evidence="1">
    <location>
        <begin position="1"/>
        <end position="25"/>
    </location>
</feature>
<feature type="chain" id="PRO_0000380565" description="Lipopolysaccharide core heptose(II)-phosphate phosphatase">
    <location>
        <begin position="26"/>
        <end position="200"/>
    </location>
</feature>
<proteinExistence type="inferred from homology"/>
<organism>
    <name type="scientific">Escherichia coli O1:K1 / APEC</name>
    <dbReference type="NCBI Taxonomy" id="405955"/>
    <lineage>
        <taxon>Bacteria</taxon>
        <taxon>Pseudomonadati</taxon>
        <taxon>Pseudomonadota</taxon>
        <taxon>Gammaproteobacteria</taxon>
        <taxon>Enterobacterales</taxon>
        <taxon>Enterobacteriaceae</taxon>
        <taxon>Escherichia</taxon>
    </lineage>
</organism>
<keyword id="KW-0378">Hydrolase</keyword>
<keyword id="KW-0574">Periplasm</keyword>
<keyword id="KW-1185">Reference proteome</keyword>
<keyword id="KW-0732">Signal</keyword>
<name>AIS_ECOK1</name>
<evidence type="ECO:0000255" key="1">
    <source>
        <dbReference type="HAMAP-Rule" id="MF_01868"/>
    </source>
</evidence>
<reference key="1">
    <citation type="journal article" date="2007" name="J. Bacteriol.">
        <title>The genome sequence of avian pathogenic Escherichia coli strain O1:K1:H7 shares strong similarities with human extraintestinal pathogenic E. coli genomes.</title>
        <authorList>
            <person name="Johnson T.J."/>
            <person name="Kariyawasam S."/>
            <person name="Wannemuehler Y."/>
            <person name="Mangiamele P."/>
            <person name="Johnson S.J."/>
            <person name="Doetkott C."/>
            <person name="Skyberg J.A."/>
            <person name="Lynne A.M."/>
            <person name="Johnson J.R."/>
            <person name="Nolan L.K."/>
        </authorList>
    </citation>
    <scope>NUCLEOTIDE SEQUENCE [LARGE SCALE GENOMIC DNA]</scope>
</reference>
<dbReference type="EC" id="3.1.3.-" evidence="1"/>
<dbReference type="EMBL" id="CP000468">
    <property type="protein sequence ID" value="ABJ01644.1"/>
    <property type="molecule type" value="Genomic_DNA"/>
</dbReference>
<dbReference type="RefSeq" id="WP_000879110.1">
    <property type="nucleotide sequence ID" value="NZ_CADILS010000004.1"/>
</dbReference>
<dbReference type="SMR" id="A1ADA4"/>
<dbReference type="KEGG" id="ecv:APECO1_4309"/>
<dbReference type="HOGENOM" id="CLU_106705_1_0_6"/>
<dbReference type="UniPathway" id="UPA00451"/>
<dbReference type="Proteomes" id="UP000008216">
    <property type="component" value="Chromosome"/>
</dbReference>
<dbReference type="GO" id="GO:0042597">
    <property type="term" value="C:periplasmic space"/>
    <property type="evidence" value="ECO:0007669"/>
    <property type="project" value="UniProtKB-SubCell"/>
</dbReference>
<dbReference type="GO" id="GO:0016791">
    <property type="term" value="F:phosphatase activity"/>
    <property type="evidence" value="ECO:0007669"/>
    <property type="project" value="UniProtKB-UniRule"/>
</dbReference>
<dbReference type="GO" id="GO:0008653">
    <property type="term" value="P:lipopolysaccharide metabolic process"/>
    <property type="evidence" value="ECO:0007669"/>
    <property type="project" value="UniProtKB-UniRule"/>
</dbReference>
<dbReference type="CDD" id="cd07040">
    <property type="entry name" value="HP"/>
    <property type="match status" value="1"/>
</dbReference>
<dbReference type="Gene3D" id="3.40.50.1240">
    <property type="entry name" value="Phosphoglycerate mutase-like"/>
    <property type="match status" value="1"/>
</dbReference>
<dbReference type="HAMAP" id="MF_01868">
    <property type="entry name" value="Ais"/>
    <property type="match status" value="1"/>
</dbReference>
<dbReference type="InterPro" id="IPR013078">
    <property type="entry name" value="His_Pase_superF_clade-1"/>
</dbReference>
<dbReference type="InterPro" id="IPR029033">
    <property type="entry name" value="His_PPase_superfam"/>
</dbReference>
<dbReference type="InterPro" id="IPR011310">
    <property type="entry name" value="LipoPS_heptP_Pase"/>
</dbReference>
<dbReference type="NCBIfam" id="NF011945">
    <property type="entry name" value="PRK15416.1"/>
    <property type="match status" value="1"/>
</dbReference>
<dbReference type="Pfam" id="PF00300">
    <property type="entry name" value="His_Phos_1"/>
    <property type="match status" value="1"/>
</dbReference>
<dbReference type="PIRSF" id="PIRSF011416">
    <property type="entry name" value="Ais-TraG-AfrS"/>
    <property type="match status" value="1"/>
</dbReference>
<dbReference type="SUPFAM" id="SSF53254">
    <property type="entry name" value="Phosphoglycerate mutase-like"/>
    <property type="match status" value="1"/>
</dbReference>
<accession>A1ADA4</accession>
<protein>
    <recommendedName>
        <fullName evidence="1">Lipopolysaccharide core heptose(II)-phosphate phosphatase</fullName>
        <ecNumber evidence="1">3.1.3.-</ecNumber>
    </recommendedName>
</protein>
<gene>
    <name evidence="1" type="primary">ais</name>
    <name type="ordered locus">Ecok1_21500</name>
    <name type="ORF">APECO1_4309</name>
</gene>